<dbReference type="EMBL" id="X83413">
    <property type="protein sequence ID" value="CAA58430.1"/>
    <property type="molecule type" value="Genomic_DNA"/>
</dbReference>
<dbReference type="EMBL" id="D10082">
    <property type="protein sequence ID" value="BAA00977.1"/>
    <property type="molecule type" value="Genomic_DNA"/>
</dbReference>
<dbReference type="PIR" id="JQ1648">
    <property type="entry name" value="JQ1648"/>
</dbReference>
<dbReference type="RefSeq" id="NP_042894.1">
    <property type="nucleotide sequence ID" value="NC_001664.2"/>
</dbReference>
<dbReference type="DNASU" id="1487883"/>
<dbReference type="GeneID" id="1487883"/>
<dbReference type="KEGG" id="vg:1487883"/>
<dbReference type="Proteomes" id="UP000009295">
    <property type="component" value="Segment"/>
</dbReference>
<dbReference type="InterPro" id="IPR003360">
    <property type="entry name" value="US22-like"/>
</dbReference>
<dbReference type="Pfam" id="PF02393">
    <property type="entry name" value="US22"/>
    <property type="match status" value="1"/>
</dbReference>
<name>VU3_HHV6U</name>
<gene>
    <name type="primary">U3</name>
    <name type="synonym">SHL2</name>
</gene>
<reference key="1">
    <citation type="journal article" date="1992" name="J. Gen. Virol.">
        <title>Identification of homologues to the human cytomegalovirus US22 gene family in human herpesvirus 6.</title>
        <authorList>
            <person name="Efstathiou S."/>
            <person name="Lawrence G.L."/>
            <person name="Brown C.M."/>
            <person name="Barrell B.G."/>
        </authorList>
    </citation>
    <scope>NUCLEOTIDE SEQUENCE [GENOMIC DNA]</scope>
</reference>
<reference key="2">
    <citation type="journal article" date="1995" name="Virology">
        <title>The DNA sequence of human herpesvirus-6: structure, coding content, and genome evolution.</title>
        <authorList>
            <person name="Gompels U.A."/>
            <person name="Nicholas J."/>
            <person name="Lawrence G.L."/>
            <person name="Jones M."/>
            <person name="Thomson B.J."/>
            <person name="Martin M.E.D."/>
            <person name="Efstathiou S."/>
            <person name="Craxton M.A."/>
            <person name="Macaulay H.A."/>
        </authorList>
    </citation>
    <scope>NUCLEOTIDE SEQUENCE [LARGE SCALE GENOMIC DNA]</scope>
</reference>
<comment type="similarity">
    <text evidence="1">Belongs to the herpesviridae US22 family.</text>
</comment>
<proteinExistence type="inferred from homology"/>
<feature type="chain" id="PRO_0000116305" description="Protein U3">
    <location>
        <begin position="1"/>
        <end position="373"/>
    </location>
</feature>
<keyword id="KW-1185">Reference proteome</keyword>
<accession>Q01350</accession>
<organism>
    <name type="scientific">Human herpesvirus 6A (strain Uganda-1102)</name>
    <name type="common">HHV-6 variant A</name>
    <name type="synonym">Human B lymphotropic virus</name>
    <dbReference type="NCBI Taxonomy" id="10370"/>
    <lineage>
        <taxon>Viruses</taxon>
        <taxon>Duplodnaviria</taxon>
        <taxon>Heunggongvirae</taxon>
        <taxon>Peploviricota</taxon>
        <taxon>Herviviricetes</taxon>
        <taxon>Herpesvirales</taxon>
        <taxon>Orthoherpesviridae</taxon>
        <taxon>Betaherpesvirinae</taxon>
        <taxon>Roseolovirus</taxon>
        <taxon>Roseolovirus humanbeta6a</taxon>
        <taxon>Human betaherpesvirus 6A</taxon>
    </lineage>
</organism>
<evidence type="ECO:0000305" key="1"/>
<sequence>METTKNRRVRFTGGLHEPAQDSTMCGNAELQSRERTKTRQRVYNESKRDLVDLLRVYTCLNSVRMFTFVNFGRRIPLAWPEGYQLVINNCRDENEYADEKLDELAGLVCCPERLVVLGYVKKRGGIGSEPCYWFSKGDIVVLLGGAGRVYAHTWLLPQQLCRVGDTIDDFLRKGLKRFYYAHQLVSSLQFVVEDPEVDGVRSCRDVLCFRDRHIGRSFALRWPKNETLLFHRRRDSFAFVMCDEARRRLAEMCFFGSFGYKYFGDEGRISLYVADDGQIFGFNDNDEDGRPRFVAEDFQQFRRIGVTQYYKSYVFRREQPEWALLPTCHLSRMFYQKTWRQADADVLFLIARNDERNKFPDAGTRSAVHDVVR</sequence>
<protein>
    <recommendedName>
        <fullName>Protein U3</fullName>
    </recommendedName>
</protein>
<organismHost>
    <name type="scientific">Homo sapiens</name>
    <name type="common">Human</name>
    <dbReference type="NCBI Taxonomy" id="9606"/>
</organismHost>